<sequence length="99" mass="10895">MNNATFNYTNVNPISHIRGSVIITICVSFTVILTVFGYIAKIFTKNNCTNNDIGLHERIKCSGCEPFCNKRDDISSPRTGVDIPSFILPGLNLSESTPN</sequence>
<proteinExistence type="inferred from homology"/>
<dbReference type="EMBL" id="M30639">
    <property type="protein sequence ID" value="AAA43746.1"/>
    <property type="molecule type" value="Genomic_RNA"/>
</dbReference>
<dbReference type="PIR" id="D36825">
    <property type="entry name" value="D36825"/>
</dbReference>
<dbReference type="SMR" id="P16208"/>
<dbReference type="GlyCosmos" id="P16208">
    <property type="glycosylation" value="2 sites, No reported glycans"/>
</dbReference>
<dbReference type="GO" id="GO:0033644">
    <property type="term" value="C:host cell membrane"/>
    <property type="evidence" value="ECO:0007669"/>
    <property type="project" value="UniProtKB-KW"/>
</dbReference>
<dbReference type="GO" id="GO:0016020">
    <property type="term" value="C:membrane"/>
    <property type="evidence" value="ECO:0007669"/>
    <property type="project" value="UniProtKB-KW"/>
</dbReference>
<dbReference type="GO" id="GO:0055036">
    <property type="term" value="C:virion membrane"/>
    <property type="evidence" value="ECO:0007669"/>
    <property type="project" value="UniProtKB-SubCell"/>
</dbReference>
<dbReference type="GO" id="GO:0015267">
    <property type="term" value="F:channel activity"/>
    <property type="evidence" value="ECO:0007669"/>
    <property type="project" value="UniProtKB-KW"/>
</dbReference>
<dbReference type="GO" id="GO:1902600">
    <property type="term" value="P:proton transmembrane transport"/>
    <property type="evidence" value="ECO:0007669"/>
    <property type="project" value="UniProtKB-KW"/>
</dbReference>
<dbReference type="InterPro" id="IPR007288">
    <property type="entry name" value="InfluenzaB_glycoprotein_NB"/>
</dbReference>
<dbReference type="Pfam" id="PF04159">
    <property type="entry name" value="NB"/>
    <property type="match status" value="1"/>
</dbReference>
<keyword id="KW-0325">Glycoprotein</keyword>
<keyword id="KW-0375">Hydrogen ion transport</keyword>
<keyword id="KW-0407">Ion channel</keyword>
<keyword id="KW-0406">Ion transport</keyword>
<keyword id="KW-0472">Membrane</keyword>
<keyword id="KW-0735">Signal-anchor</keyword>
<keyword id="KW-0812">Transmembrane</keyword>
<keyword id="KW-1133">Transmembrane helix</keyword>
<keyword id="KW-0813">Transport</keyword>
<keyword id="KW-1182">Viral ion channel</keyword>
<keyword id="KW-0946">Virion</keyword>
<feature type="chain" id="PRO_0000078914" description="Glycoprotein NB">
    <location>
        <begin position="1"/>
        <end position="99"/>
    </location>
</feature>
<feature type="topological domain" description="Virion surface" evidence="2">
    <location>
        <begin position="1"/>
        <end position="18"/>
    </location>
</feature>
<feature type="transmembrane region" description="Helical; Signal-anchor for type III membrane protein" evidence="2">
    <location>
        <begin position="19"/>
        <end position="40"/>
    </location>
</feature>
<feature type="topological domain" description="Intravirion" evidence="2">
    <location>
        <begin position="41"/>
        <end position="99"/>
    </location>
</feature>
<feature type="glycosylation site" description="N-linked (GlcNAc...) asparagine; by host" evidence="2">
    <location>
        <position position="3"/>
    </location>
</feature>
<feature type="glycosylation site" description="N-linked (GlcNAc...) asparagine; by host" evidence="2">
    <location>
        <position position="7"/>
    </location>
</feature>
<name>VNB_INBVI</name>
<reference key="1">
    <citation type="journal article" date="1990" name="Virology">
        <title>Antigenic, sequence, and crystal variation in influenza B neuraminidase.</title>
        <authorList>
            <person name="Air G.M."/>
            <person name="Laver W.G."/>
            <person name="Luo M."/>
            <person name="Stray S.J."/>
            <person name="Legrone G."/>
            <person name="Webster R.G."/>
        </authorList>
    </citation>
    <scope>NUCLEOTIDE SEQUENCE [GENOMIC RNA]</scope>
</reference>
<evidence type="ECO:0000250" key="1"/>
<evidence type="ECO:0000255" key="2"/>
<evidence type="ECO:0000305" key="3"/>
<organism>
    <name type="scientific">Influenza B virus (strain B/Victoria/3/1985)</name>
    <dbReference type="NCBI Taxonomy" id="11547"/>
    <lineage>
        <taxon>Viruses</taxon>
        <taxon>Riboviria</taxon>
        <taxon>Orthornavirae</taxon>
        <taxon>Negarnaviricota</taxon>
        <taxon>Polyploviricotina</taxon>
        <taxon>Insthoviricetes</taxon>
        <taxon>Articulavirales</taxon>
        <taxon>Orthomyxoviridae</taxon>
        <taxon>Betainfluenzavirus</taxon>
        <taxon>Betainfluenzavirus influenzae</taxon>
        <taxon>Influenza B virus</taxon>
    </lineage>
</organism>
<gene>
    <name type="primary">NB</name>
</gene>
<organismHost>
    <name type="scientific">Homo sapiens</name>
    <name type="common">Human</name>
    <dbReference type="NCBI Taxonomy" id="9606"/>
</organismHost>
<accession>P16208</accession>
<comment type="function">
    <text evidence="1">Putative viral proton channel. May play a role in virus entry (By similarity).</text>
</comment>
<comment type="subunit">
    <text evidence="1">Dimer.</text>
</comment>
<comment type="subcellular location">
    <subcellularLocation>
        <location evidence="3">Virion membrane</location>
        <topology evidence="3">Single-pass type III membrane protein</topology>
    </subcellularLocation>
</comment>
<comment type="similarity">
    <text evidence="3">Belongs to the influenza viruses type B glycoprotein NB family.</text>
</comment>
<protein>
    <recommendedName>
        <fullName>Glycoprotein NB</fullName>
    </recommendedName>
</protein>